<accession>Q5E2E4</accession>
<evidence type="ECO:0000255" key="1">
    <source>
        <dbReference type="HAMAP-Rule" id="MF_01108"/>
    </source>
</evidence>
<comment type="function">
    <text evidence="1">Catalyzes the hydrolysis of the amide bond of N(2)-acetylated L-amino acids. Cleaves the acetyl group from N-acetyl-L-ornithine to form L-ornithine, an intermediate in L-arginine biosynthesis pathway, and a branchpoint in the synthesis of polyamines.</text>
</comment>
<comment type="catalytic activity">
    <reaction evidence="1">
        <text>N(2)-acetyl-L-ornithine + H2O = L-ornithine + acetate</text>
        <dbReference type="Rhea" id="RHEA:15941"/>
        <dbReference type="ChEBI" id="CHEBI:15377"/>
        <dbReference type="ChEBI" id="CHEBI:30089"/>
        <dbReference type="ChEBI" id="CHEBI:46911"/>
        <dbReference type="ChEBI" id="CHEBI:57805"/>
        <dbReference type="EC" id="3.5.1.16"/>
    </reaction>
</comment>
<comment type="cofactor">
    <cofactor evidence="1">
        <name>Zn(2+)</name>
        <dbReference type="ChEBI" id="CHEBI:29105"/>
    </cofactor>
    <cofactor evidence="1">
        <name>Co(2+)</name>
        <dbReference type="ChEBI" id="CHEBI:48828"/>
    </cofactor>
    <text evidence="1">Binds 2 Zn(2+) or Co(2+) ions per subunit.</text>
</comment>
<comment type="cofactor">
    <cofactor evidence="1">
        <name>glutathione</name>
        <dbReference type="ChEBI" id="CHEBI:57925"/>
    </cofactor>
</comment>
<comment type="pathway">
    <text evidence="1">Amino-acid biosynthesis; L-arginine biosynthesis; L-ornithine from N(2)-acetyl-L-ornithine (linear): step 1/1.</text>
</comment>
<comment type="subunit">
    <text evidence="1">Homodimer.</text>
</comment>
<comment type="subcellular location">
    <subcellularLocation>
        <location evidence="1">Cytoplasm</location>
    </subcellularLocation>
</comment>
<comment type="similarity">
    <text evidence="1">Belongs to the peptidase M20A family. ArgE subfamily.</text>
</comment>
<name>ARGE_ALIF1</name>
<keyword id="KW-0028">Amino-acid biosynthesis</keyword>
<keyword id="KW-0055">Arginine biosynthesis</keyword>
<keyword id="KW-0170">Cobalt</keyword>
<keyword id="KW-0963">Cytoplasm</keyword>
<keyword id="KW-0378">Hydrolase</keyword>
<keyword id="KW-0479">Metal-binding</keyword>
<keyword id="KW-1185">Reference proteome</keyword>
<keyword id="KW-0862">Zinc</keyword>
<proteinExistence type="inferred from homology"/>
<feature type="chain" id="PRO_1000065065" description="Acetylornithine deacetylase">
    <location>
        <begin position="1"/>
        <end position="378"/>
    </location>
</feature>
<feature type="active site" evidence="1">
    <location>
        <position position="78"/>
    </location>
</feature>
<feature type="active site" evidence="1">
    <location>
        <position position="140"/>
    </location>
</feature>
<feature type="binding site" evidence="1">
    <location>
        <position position="76"/>
    </location>
    <ligand>
        <name>Zn(2+)</name>
        <dbReference type="ChEBI" id="CHEBI:29105"/>
        <label>1</label>
    </ligand>
</feature>
<feature type="binding site" evidence="1">
    <location>
        <position position="108"/>
    </location>
    <ligand>
        <name>Zn(2+)</name>
        <dbReference type="ChEBI" id="CHEBI:29105"/>
        <label>1</label>
    </ligand>
</feature>
<feature type="binding site" evidence="1">
    <location>
        <position position="108"/>
    </location>
    <ligand>
        <name>Zn(2+)</name>
        <dbReference type="ChEBI" id="CHEBI:29105"/>
        <label>2</label>
    </ligand>
</feature>
<feature type="binding site" evidence="1">
    <location>
        <position position="141"/>
    </location>
    <ligand>
        <name>Zn(2+)</name>
        <dbReference type="ChEBI" id="CHEBI:29105"/>
        <label>2</label>
    </ligand>
</feature>
<feature type="binding site" evidence="1">
    <location>
        <position position="165"/>
    </location>
    <ligand>
        <name>Zn(2+)</name>
        <dbReference type="ChEBI" id="CHEBI:29105"/>
        <label>1</label>
    </ligand>
</feature>
<feature type="binding site" evidence="1">
    <location>
        <position position="351"/>
    </location>
    <ligand>
        <name>Zn(2+)</name>
        <dbReference type="ChEBI" id="CHEBI:29105"/>
        <label>2</label>
    </ligand>
</feature>
<protein>
    <recommendedName>
        <fullName evidence="1">Acetylornithine deacetylase</fullName>
        <shortName evidence="1">AO</shortName>
        <shortName evidence="1">Acetylornithinase</shortName>
        <ecNumber evidence="1">3.5.1.16</ecNumber>
    </recommendedName>
    <alternativeName>
        <fullName evidence="1">N-acetylornithinase</fullName>
        <shortName evidence="1">NAO</shortName>
    </alternativeName>
</protein>
<sequence length="378" mass="41840">MKFPEFKDYYQQLISTSSISSTDSSWDEGNAEVINKLAQWCEDLGCEVEIEEIEKGKLNLLAKLGSGEGGLLLAGHTDTVPYDEGRWNYEPHALTEANDRFYGLGTADMKGFFAFILEAIKNINWKDQSKPLYILATCDEETTMLGARHFASNTKIQPDYCIIGEPTSLKPIRGHKGHVANAIRVTGKSGHSSDPAHGVNALEIMNEIMFALMTLKNKLVKEYHNPGFSIPYPTLNLGHIHGGDSPNRICGCCELHYDVRPLPGISLDGLDNMLRDALKEIEAKWPGRIDITPLHEPIPGYECSADSPIVTSTADICGQDVETVNYCTEAPFLQDLCPTLVLGPGSIEQAHQPDEYLAFSFIDPTISILSKLMYKHCF</sequence>
<gene>
    <name evidence="1" type="primary">argE</name>
    <name type="ordered locus">VF_2307</name>
</gene>
<dbReference type="EC" id="3.5.1.16" evidence="1"/>
<dbReference type="EMBL" id="CP000020">
    <property type="protein sequence ID" value="AAW86802.1"/>
    <property type="molecule type" value="Genomic_DNA"/>
</dbReference>
<dbReference type="RefSeq" id="WP_011262714.1">
    <property type="nucleotide sequence ID" value="NC_006840.2"/>
</dbReference>
<dbReference type="RefSeq" id="YP_205690.1">
    <property type="nucleotide sequence ID" value="NC_006840.2"/>
</dbReference>
<dbReference type="SMR" id="Q5E2E4"/>
<dbReference type="STRING" id="312309.VF_2307"/>
<dbReference type="EnsemblBacteria" id="AAW86802">
    <property type="protein sequence ID" value="AAW86802"/>
    <property type="gene ID" value="VF_2307"/>
</dbReference>
<dbReference type="GeneID" id="54165022"/>
<dbReference type="KEGG" id="vfi:VF_2307"/>
<dbReference type="PATRIC" id="fig|312309.11.peg.2345"/>
<dbReference type="eggNOG" id="COG0624">
    <property type="taxonomic scope" value="Bacteria"/>
</dbReference>
<dbReference type="HOGENOM" id="CLU_021802_2_4_6"/>
<dbReference type="OrthoDB" id="3665926at2"/>
<dbReference type="UniPathway" id="UPA00068">
    <property type="reaction ID" value="UER00110"/>
</dbReference>
<dbReference type="Proteomes" id="UP000000537">
    <property type="component" value="Chromosome I"/>
</dbReference>
<dbReference type="GO" id="GO:0005737">
    <property type="term" value="C:cytoplasm"/>
    <property type="evidence" value="ECO:0007669"/>
    <property type="project" value="UniProtKB-SubCell"/>
</dbReference>
<dbReference type="GO" id="GO:0008777">
    <property type="term" value="F:acetylornithine deacetylase activity"/>
    <property type="evidence" value="ECO:0007669"/>
    <property type="project" value="UniProtKB-UniRule"/>
</dbReference>
<dbReference type="GO" id="GO:0008270">
    <property type="term" value="F:zinc ion binding"/>
    <property type="evidence" value="ECO:0007669"/>
    <property type="project" value="UniProtKB-UniRule"/>
</dbReference>
<dbReference type="GO" id="GO:0006526">
    <property type="term" value="P:L-arginine biosynthetic process"/>
    <property type="evidence" value="ECO:0007669"/>
    <property type="project" value="UniProtKB-UniRule"/>
</dbReference>
<dbReference type="CDD" id="cd03894">
    <property type="entry name" value="M20_ArgE"/>
    <property type="match status" value="1"/>
</dbReference>
<dbReference type="FunFam" id="3.30.70.360:FF:000003">
    <property type="entry name" value="Acetylornithine deacetylase"/>
    <property type="match status" value="1"/>
</dbReference>
<dbReference type="Gene3D" id="3.30.70.360">
    <property type="match status" value="1"/>
</dbReference>
<dbReference type="Gene3D" id="3.40.630.10">
    <property type="entry name" value="Zn peptidases"/>
    <property type="match status" value="1"/>
</dbReference>
<dbReference type="HAMAP" id="MF_01108">
    <property type="entry name" value="ArgE"/>
    <property type="match status" value="1"/>
</dbReference>
<dbReference type="InterPro" id="IPR010169">
    <property type="entry name" value="AcOrn-deacetyl"/>
</dbReference>
<dbReference type="InterPro" id="IPR001261">
    <property type="entry name" value="ArgE/DapE_CS"/>
</dbReference>
<dbReference type="InterPro" id="IPR036264">
    <property type="entry name" value="Bact_exopeptidase_dim_dom"/>
</dbReference>
<dbReference type="InterPro" id="IPR002933">
    <property type="entry name" value="Peptidase_M20"/>
</dbReference>
<dbReference type="InterPro" id="IPR011650">
    <property type="entry name" value="Peptidase_M20_dimer"/>
</dbReference>
<dbReference type="InterPro" id="IPR050072">
    <property type="entry name" value="Peptidase_M20A"/>
</dbReference>
<dbReference type="NCBIfam" id="TIGR01892">
    <property type="entry name" value="AcOrn-deacetyl"/>
    <property type="match status" value="1"/>
</dbReference>
<dbReference type="NCBIfam" id="NF003474">
    <property type="entry name" value="PRK05111.1"/>
    <property type="match status" value="1"/>
</dbReference>
<dbReference type="PANTHER" id="PTHR43808">
    <property type="entry name" value="ACETYLORNITHINE DEACETYLASE"/>
    <property type="match status" value="1"/>
</dbReference>
<dbReference type="PANTHER" id="PTHR43808:SF1">
    <property type="entry name" value="ACETYLORNITHINE DEACETYLASE"/>
    <property type="match status" value="1"/>
</dbReference>
<dbReference type="Pfam" id="PF07687">
    <property type="entry name" value="M20_dimer"/>
    <property type="match status" value="1"/>
</dbReference>
<dbReference type="Pfam" id="PF01546">
    <property type="entry name" value="Peptidase_M20"/>
    <property type="match status" value="1"/>
</dbReference>
<dbReference type="SUPFAM" id="SSF55031">
    <property type="entry name" value="Bacterial exopeptidase dimerisation domain"/>
    <property type="match status" value="1"/>
</dbReference>
<dbReference type="SUPFAM" id="SSF53187">
    <property type="entry name" value="Zn-dependent exopeptidases"/>
    <property type="match status" value="1"/>
</dbReference>
<dbReference type="PROSITE" id="PS00758">
    <property type="entry name" value="ARGE_DAPE_CPG2_1"/>
    <property type="match status" value="1"/>
</dbReference>
<dbReference type="PROSITE" id="PS00759">
    <property type="entry name" value="ARGE_DAPE_CPG2_2"/>
    <property type="match status" value="1"/>
</dbReference>
<reference key="1">
    <citation type="journal article" date="2005" name="Proc. Natl. Acad. Sci. U.S.A.">
        <title>Complete genome sequence of Vibrio fischeri: a symbiotic bacterium with pathogenic congeners.</title>
        <authorList>
            <person name="Ruby E.G."/>
            <person name="Urbanowski M."/>
            <person name="Campbell J."/>
            <person name="Dunn A."/>
            <person name="Faini M."/>
            <person name="Gunsalus R."/>
            <person name="Lostroh P."/>
            <person name="Lupp C."/>
            <person name="McCann J."/>
            <person name="Millikan D."/>
            <person name="Schaefer A."/>
            <person name="Stabb E."/>
            <person name="Stevens A."/>
            <person name="Visick K."/>
            <person name="Whistler C."/>
            <person name="Greenberg E.P."/>
        </authorList>
    </citation>
    <scope>NUCLEOTIDE SEQUENCE [LARGE SCALE GENOMIC DNA]</scope>
    <source>
        <strain>ATCC 700601 / ES114</strain>
    </source>
</reference>
<organism>
    <name type="scientific">Aliivibrio fischeri (strain ATCC 700601 / ES114)</name>
    <name type="common">Vibrio fischeri</name>
    <dbReference type="NCBI Taxonomy" id="312309"/>
    <lineage>
        <taxon>Bacteria</taxon>
        <taxon>Pseudomonadati</taxon>
        <taxon>Pseudomonadota</taxon>
        <taxon>Gammaproteobacteria</taxon>
        <taxon>Vibrionales</taxon>
        <taxon>Vibrionaceae</taxon>
        <taxon>Aliivibrio</taxon>
    </lineage>
</organism>